<comment type="function">
    <text>Aspartyl protease inhibitor.</text>
</comment>
<comment type="subcellular location">
    <subcellularLocation>
        <location>Secreted</location>
    </subcellularLocation>
</comment>
<comment type="similarity">
    <text evidence="4">Belongs to the protease inhibitor I33 family.</text>
</comment>
<organism>
    <name type="scientific">Dirofilaria immitis</name>
    <name type="common">Canine heartworm</name>
    <dbReference type="NCBI Taxonomy" id="6287"/>
    <lineage>
        <taxon>Eukaryota</taxon>
        <taxon>Metazoa</taxon>
        <taxon>Ecdysozoa</taxon>
        <taxon>Nematoda</taxon>
        <taxon>Chromadorea</taxon>
        <taxon>Rhabditida</taxon>
        <taxon>Spirurina</taxon>
        <taxon>Spiruromorpha</taxon>
        <taxon>Filarioidea</taxon>
        <taxon>Onchocercidae</taxon>
        <taxon>Dirofilaria</taxon>
    </lineage>
</organism>
<proteinExistence type="evidence at transcript level"/>
<gene>
    <name type="primary">DIT33</name>
</gene>
<reference key="1">
    <citation type="journal article" date="1996" name="Parasitology">
        <title>Cloning and expression of DiT33 from Dirofilaria immitis: a specific and early marker of heartworm infection.</title>
        <authorList>
            <person name="Hong X.Q."/>
            <person name="Mejia J.S."/>
            <person name="Kumar S."/>
            <person name="Perler F.B."/>
            <person name="Carlow C.K.S."/>
        </authorList>
    </citation>
    <scope>NUCLEOTIDE SEQUENCE [MRNA]</scope>
</reference>
<reference key="2">
    <citation type="submission" date="1995-07" db="EMBL/GenBank/DDBJ databases">
        <title>Molecular cloning of a Dirofilaria immitis aspartyl protease inhibitor homologue.</title>
        <authorList>
            <person name="Wisnewski N."/>
            <person name="Frank G.R."/>
            <person name="Grieve R.B."/>
        </authorList>
    </citation>
    <scope>NUCLEOTIDE SEQUENCE [MRNA]</scope>
</reference>
<dbReference type="EMBL" id="U24180">
    <property type="protein sequence ID" value="AAC47103.1"/>
    <property type="molecule type" value="mRNA"/>
</dbReference>
<dbReference type="EMBL" id="U31450">
    <property type="protein sequence ID" value="AAA70419.1"/>
    <property type="molecule type" value="mRNA"/>
</dbReference>
<dbReference type="SMR" id="Q27384"/>
<dbReference type="MEROPS" id="I33.002"/>
<dbReference type="GO" id="GO:0005576">
    <property type="term" value="C:extracellular region"/>
    <property type="evidence" value="ECO:0007669"/>
    <property type="project" value="UniProtKB-SubCell"/>
</dbReference>
<dbReference type="GO" id="GO:0019828">
    <property type="term" value="F:aspartic-type endopeptidase inhibitor activity"/>
    <property type="evidence" value="ECO:0007669"/>
    <property type="project" value="UniProtKB-KW"/>
</dbReference>
<dbReference type="CDD" id="cd00225">
    <property type="entry name" value="API3"/>
    <property type="match status" value="1"/>
</dbReference>
<dbReference type="Gene3D" id="3.30.1120.50">
    <property type="entry name" value="Pepsin inhibitor-3"/>
    <property type="match status" value="2"/>
</dbReference>
<dbReference type="InterPro" id="IPR010480">
    <property type="entry name" value="Pepsin-I3"/>
</dbReference>
<dbReference type="InterPro" id="IPR038412">
    <property type="entry name" value="Pepsin-I3_sf"/>
</dbReference>
<dbReference type="InterPro" id="IPR051901">
    <property type="entry name" value="Protease_Inhibitor_I33"/>
</dbReference>
<dbReference type="PANTHER" id="PTHR37969">
    <property type="entry name" value="PROTEIN CBG07421-RELATED"/>
    <property type="match status" value="1"/>
</dbReference>
<dbReference type="PANTHER" id="PTHR37969:SF1">
    <property type="entry name" value="PROTEIN CBG13105"/>
    <property type="match status" value="1"/>
</dbReference>
<dbReference type="Pfam" id="PF06394">
    <property type="entry name" value="Pepsin-I3"/>
    <property type="match status" value="2"/>
</dbReference>
<dbReference type="SUPFAM" id="SSF55149">
    <property type="entry name" value="Pepsin inhibitor-3"/>
    <property type="match status" value="1"/>
</dbReference>
<name>API_DIRIM</name>
<evidence type="ECO:0000250" key="1"/>
<evidence type="ECO:0000255" key="2"/>
<evidence type="ECO:0000256" key="3">
    <source>
        <dbReference type="SAM" id="MobiDB-lite"/>
    </source>
</evidence>
<evidence type="ECO:0000305" key="4"/>
<accession>Q27384</accession>
<protein>
    <recommendedName>
        <fullName>Pepsin inhibitor Dit33</fullName>
    </recommendedName>
</protein>
<feature type="signal peptide" evidence="2">
    <location>
        <begin position="1"/>
        <end position="17"/>
    </location>
</feature>
<feature type="chain" id="PRO_0000002396" description="Pepsin inhibitor Dit33">
    <location>
        <begin position="18"/>
        <end position="234"/>
    </location>
</feature>
<feature type="region of interest" description="Disordered" evidence="3">
    <location>
        <begin position="200"/>
        <end position="222"/>
    </location>
</feature>
<feature type="compositionally biased region" description="Polar residues" evidence="3">
    <location>
        <begin position="204"/>
        <end position="219"/>
    </location>
</feature>
<feature type="disulfide bond" evidence="1">
    <location>
        <begin position="135"/>
        <end position="230"/>
    </location>
</feature>
<keyword id="KW-0062">Aspartic protease inhibitor</keyword>
<keyword id="KW-1015">Disulfide bond</keyword>
<keyword id="KW-0646">Protease inhibitor</keyword>
<keyword id="KW-0964">Secreted</keyword>
<keyword id="KW-0732">Signal</keyword>
<sequence>MKILFCFVLLAIAALRASVINRHNKRFAGFSVAGIGGTAGCVVVDNKLFANSFYLRDLTTEEQRELAQYVEDSNQYKEEVKTSLEERRKGWQLARHGEKDAKVLSSLAEKKFPKPPKKPSFCSAGDTTQYYFDGCMVQNNKIYVGRMYVRDLTSDEINQLKTFDAKMTAYQKYLSSSIQQQVDSLFGDKSNLFNLFTDTRHETSSQPSDATTISTTTQAPVEPPETPHFCIAIY</sequence>